<organism>
    <name type="scientific">Listeria monocytogenes serovar 1/2a (strain ATCC BAA-679 / EGD-e)</name>
    <dbReference type="NCBI Taxonomy" id="169963"/>
    <lineage>
        <taxon>Bacteria</taxon>
        <taxon>Bacillati</taxon>
        <taxon>Bacillota</taxon>
        <taxon>Bacilli</taxon>
        <taxon>Bacillales</taxon>
        <taxon>Listeriaceae</taxon>
        <taxon>Listeria</taxon>
    </lineage>
</organism>
<gene>
    <name evidence="1" type="primary">rsmG</name>
    <name type="ordered locus">lmo2802</name>
</gene>
<keyword id="KW-0963">Cytoplasm</keyword>
<keyword id="KW-0489">Methyltransferase</keyword>
<keyword id="KW-1185">Reference proteome</keyword>
<keyword id="KW-0698">rRNA processing</keyword>
<keyword id="KW-0949">S-adenosyl-L-methionine</keyword>
<keyword id="KW-0808">Transferase</keyword>
<protein>
    <recommendedName>
        <fullName evidence="1">Ribosomal RNA small subunit methyltransferase G</fullName>
        <ecNumber evidence="1">2.1.1.-</ecNumber>
    </recommendedName>
    <alternativeName>
        <fullName evidence="1">16S rRNA 7-methylguanosine methyltransferase</fullName>
        <shortName evidence="1">16S rRNA m7G methyltransferase</shortName>
    </alternativeName>
</protein>
<proteinExistence type="inferred from homology"/>
<evidence type="ECO:0000255" key="1">
    <source>
        <dbReference type="HAMAP-Rule" id="MF_00074"/>
    </source>
</evidence>
<evidence type="ECO:0000256" key="2">
    <source>
        <dbReference type="SAM" id="MobiDB-lite"/>
    </source>
</evidence>
<accession>Q8Y3N3</accession>
<feature type="chain" id="PRO_0000184275" description="Ribosomal RNA small subunit methyltransferase G">
    <location>
        <begin position="1"/>
        <end position="238"/>
    </location>
</feature>
<feature type="region of interest" description="Disordered" evidence="2">
    <location>
        <begin position="219"/>
        <end position="238"/>
    </location>
</feature>
<feature type="binding site" evidence="1">
    <location>
        <position position="77"/>
    </location>
    <ligand>
        <name>S-adenosyl-L-methionine</name>
        <dbReference type="ChEBI" id="CHEBI:59789"/>
    </ligand>
</feature>
<feature type="binding site" evidence="1">
    <location>
        <position position="82"/>
    </location>
    <ligand>
        <name>S-adenosyl-L-methionine</name>
        <dbReference type="ChEBI" id="CHEBI:59789"/>
    </ligand>
</feature>
<feature type="binding site" evidence="1">
    <location>
        <begin position="128"/>
        <end position="129"/>
    </location>
    <ligand>
        <name>S-adenosyl-L-methionine</name>
        <dbReference type="ChEBI" id="CHEBI:59789"/>
    </ligand>
</feature>
<feature type="binding site" evidence="1">
    <location>
        <position position="147"/>
    </location>
    <ligand>
        <name>S-adenosyl-L-methionine</name>
        <dbReference type="ChEBI" id="CHEBI:59789"/>
    </ligand>
</feature>
<dbReference type="EC" id="2.1.1.-" evidence="1"/>
<dbReference type="EMBL" id="AL591984">
    <property type="protein sequence ID" value="CAD01015.1"/>
    <property type="molecule type" value="Genomic_DNA"/>
</dbReference>
<dbReference type="PIR" id="AI1424">
    <property type="entry name" value="AI1424"/>
</dbReference>
<dbReference type="RefSeq" id="WP_003722161.1">
    <property type="nucleotide sequence ID" value="NZ_CP149495.1"/>
</dbReference>
<dbReference type="SMR" id="Q8Y3N3"/>
<dbReference type="STRING" id="169963.gene:17595519"/>
<dbReference type="PaxDb" id="169963-lmo2802"/>
<dbReference type="EnsemblBacteria" id="CAD01015">
    <property type="protein sequence ID" value="CAD01015"/>
    <property type="gene ID" value="CAD01015"/>
</dbReference>
<dbReference type="KEGG" id="lmo:lmo2802"/>
<dbReference type="PATRIC" id="fig|169963.11.peg.2872"/>
<dbReference type="eggNOG" id="COG0357">
    <property type="taxonomic scope" value="Bacteria"/>
</dbReference>
<dbReference type="HOGENOM" id="CLU_065341_0_2_9"/>
<dbReference type="OrthoDB" id="9808773at2"/>
<dbReference type="PhylomeDB" id="Q8Y3N3"/>
<dbReference type="BioCyc" id="LMON169963:LMO2802-MONOMER"/>
<dbReference type="Proteomes" id="UP000000817">
    <property type="component" value="Chromosome"/>
</dbReference>
<dbReference type="GO" id="GO:0005829">
    <property type="term" value="C:cytosol"/>
    <property type="evidence" value="ECO:0000318"/>
    <property type="project" value="GO_Central"/>
</dbReference>
<dbReference type="GO" id="GO:0070043">
    <property type="term" value="F:rRNA (guanine-N7-)-methyltransferase activity"/>
    <property type="evidence" value="ECO:0000318"/>
    <property type="project" value="GO_Central"/>
</dbReference>
<dbReference type="CDD" id="cd02440">
    <property type="entry name" value="AdoMet_MTases"/>
    <property type="match status" value="1"/>
</dbReference>
<dbReference type="FunFam" id="3.40.50.150:FF:000041">
    <property type="entry name" value="Ribosomal RNA small subunit methyltransferase G"/>
    <property type="match status" value="1"/>
</dbReference>
<dbReference type="Gene3D" id="3.40.50.150">
    <property type="entry name" value="Vaccinia Virus protein VP39"/>
    <property type="match status" value="1"/>
</dbReference>
<dbReference type="HAMAP" id="MF_00074">
    <property type="entry name" value="16SrRNA_methyltr_G"/>
    <property type="match status" value="1"/>
</dbReference>
<dbReference type="InterPro" id="IPR003682">
    <property type="entry name" value="rRNA_ssu_MeTfrase_G"/>
</dbReference>
<dbReference type="InterPro" id="IPR029063">
    <property type="entry name" value="SAM-dependent_MTases_sf"/>
</dbReference>
<dbReference type="NCBIfam" id="TIGR00138">
    <property type="entry name" value="rsmG_gidB"/>
    <property type="match status" value="1"/>
</dbReference>
<dbReference type="PANTHER" id="PTHR31760">
    <property type="entry name" value="S-ADENOSYL-L-METHIONINE-DEPENDENT METHYLTRANSFERASES SUPERFAMILY PROTEIN"/>
    <property type="match status" value="1"/>
</dbReference>
<dbReference type="PANTHER" id="PTHR31760:SF0">
    <property type="entry name" value="S-ADENOSYL-L-METHIONINE-DEPENDENT METHYLTRANSFERASES SUPERFAMILY PROTEIN"/>
    <property type="match status" value="1"/>
</dbReference>
<dbReference type="Pfam" id="PF02527">
    <property type="entry name" value="GidB"/>
    <property type="match status" value="1"/>
</dbReference>
<dbReference type="PIRSF" id="PIRSF003078">
    <property type="entry name" value="GidB"/>
    <property type="match status" value="1"/>
</dbReference>
<dbReference type="SUPFAM" id="SSF53335">
    <property type="entry name" value="S-adenosyl-L-methionine-dependent methyltransferases"/>
    <property type="match status" value="1"/>
</dbReference>
<name>RSMG_LISMO</name>
<comment type="function">
    <text evidence="1">Specifically methylates the N7 position of guanine in position 535 of 16S rRNA.</text>
</comment>
<comment type="subcellular location">
    <subcellularLocation>
        <location evidence="1">Cytoplasm</location>
    </subcellularLocation>
</comment>
<comment type="similarity">
    <text evidence="1">Belongs to the methyltransferase superfamily. RNA methyltransferase RsmG family.</text>
</comment>
<sequence length="238" mass="27158">MNPEQFQMALAEKGIELSDDQMKQFHDYFEMLVEWNEKMNLTAITDEKEVYLKHFYDSISAAFYVDFTKFDTICDVGAGAGFPSLPIKICFPHLKVSIVDSLKKRMTFLDALAEKLGLTDVHFYHDRAETFGQNKAHREKYDLVTARAVARMSVLSELCMPLVKKGGSFLVMKAAQAEQELQTAEKAIKLFGGKVEEHFSFSLPVEESERNIYVITKTKETPNKYPRKPGTPNKLPIE</sequence>
<reference key="1">
    <citation type="journal article" date="2001" name="Science">
        <title>Comparative genomics of Listeria species.</title>
        <authorList>
            <person name="Glaser P."/>
            <person name="Frangeul L."/>
            <person name="Buchrieser C."/>
            <person name="Rusniok C."/>
            <person name="Amend A."/>
            <person name="Baquero F."/>
            <person name="Berche P."/>
            <person name="Bloecker H."/>
            <person name="Brandt P."/>
            <person name="Chakraborty T."/>
            <person name="Charbit A."/>
            <person name="Chetouani F."/>
            <person name="Couve E."/>
            <person name="de Daruvar A."/>
            <person name="Dehoux P."/>
            <person name="Domann E."/>
            <person name="Dominguez-Bernal G."/>
            <person name="Duchaud E."/>
            <person name="Durant L."/>
            <person name="Dussurget O."/>
            <person name="Entian K.-D."/>
            <person name="Fsihi H."/>
            <person name="Garcia-del Portillo F."/>
            <person name="Garrido P."/>
            <person name="Gautier L."/>
            <person name="Goebel W."/>
            <person name="Gomez-Lopez N."/>
            <person name="Hain T."/>
            <person name="Hauf J."/>
            <person name="Jackson D."/>
            <person name="Jones L.-M."/>
            <person name="Kaerst U."/>
            <person name="Kreft J."/>
            <person name="Kuhn M."/>
            <person name="Kunst F."/>
            <person name="Kurapkat G."/>
            <person name="Madueno E."/>
            <person name="Maitournam A."/>
            <person name="Mata Vicente J."/>
            <person name="Ng E."/>
            <person name="Nedjari H."/>
            <person name="Nordsiek G."/>
            <person name="Novella S."/>
            <person name="de Pablos B."/>
            <person name="Perez-Diaz J.-C."/>
            <person name="Purcell R."/>
            <person name="Remmel B."/>
            <person name="Rose M."/>
            <person name="Schlueter T."/>
            <person name="Simoes N."/>
            <person name="Tierrez A."/>
            <person name="Vazquez-Boland J.-A."/>
            <person name="Voss H."/>
            <person name="Wehland J."/>
            <person name="Cossart P."/>
        </authorList>
    </citation>
    <scope>NUCLEOTIDE SEQUENCE [LARGE SCALE GENOMIC DNA]</scope>
    <source>
        <strain>ATCC BAA-679 / EGD-e</strain>
    </source>
</reference>